<name>KATG_RUEPO</name>
<evidence type="ECO:0000255" key="1">
    <source>
        <dbReference type="HAMAP-Rule" id="MF_01961"/>
    </source>
</evidence>
<reference key="1">
    <citation type="journal article" date="2004" name="Nature">
        <title>Genome sequence of Silicibacter pomeroyi reveals adaptations to the marine environment.</title>
        <authorList>
            <person name="Moran M.A."/>
            <person name="Buchan A."/>
            <person name="Gonzalez J.M."/>
            <person name="Heidelberg J.F."/>
            <person name="Whitman W.B."/>
            <person name="Kiene R.P."/>
            <person name="Henriksen J.R."/>
            <person name="King G.M."/>
            <person name="Belas R."/>
            <person name="Fuqua C."/>
            <person name="Brinkac L.M."/>
            <person name="Lewis M."/>
            <person name="Johri S."/>
            <person name="Weaver B."/>
            <person name="Pai G."/>
            <person name="Eisen J.A."/>
            <person name="Rahe E."/>
            <person name="Sheldon W.M."/>
            <person name="Ye W."/>
            <person name="Miller T.R."/>
            <person name="Carlton J."/>
            <person name="Rasko D.A."/>
            <person name="Paulsen I.T."/>
            <person name="Ren Q."/>
            <person name="Daugherty S.C."/>
            <person name="DeBoy R.T."/>
            <person name="Dodson R.J."/>
            <person name="Durkin A.S."/>
            <person name="Madupu R."/>
            <person name="Nelson W.C."/>
            <person name="Sullivan S.A."/>
            <person name="Rosovitz M.J."/>
            <person name="Haft D.H."/>
            <person name="Selengut J."/>
            <person name="Ward N."/>
        </authorList>
    </citation>
    <scope>NUCLEOTIDE SEQUENCE [LARGE SCALE GENOMIC DNA]</scope>
    <source>
        <strain>ATCC 700808 / DSM 15171 / DSS-3</strain>
    </source>
</reference>
<reference key="2">
    <citation type="journal article" date="2014" name="Stand. Genomic Sci.">
        <title>An updated genome annotation for the model marine bacterium Ruegeria pomeroyi DSS-3.</title>
        <authorList>
            <person name="Rivers A.R."/>
            <person name="Smith C.B."/>
            <person name="Moran M.A."/>
        </authorList>
    </citation>
    <scope>GENOME REANNOTATION</scope>
    <source>
        <strain>ATCC 700808 / DSM 15171 / DSS-3</strain>
    </source>
</reference>
<feature type="chain" id="PRO_0000354933" description="Catalase-peroxidase">
    <location>
        <begin position="1"/>
        <end position="731"/>
    </location>
</feature>
<feature type="active site" description="Proton acceptor" evidence="1">
    <location>
        <position position="99"/>
    </location>
</feature>
<feature type="binding site" description="axial binding residue" evidence="1">
    <location>
        <position position="267"/>
    </location>
    <ligand>
        <name>heme b</name>
        <dbReference type="ChEBI" id="CHEBI:60344"/>
    </ligand>
    <ligandPart>
        <name>Fe</name>
        <dbReference type="ChEBI" id="CHEBI:18248"/>
    </ligandPart>
</feature>
<feature type="site" description="Transition state stabilizer" evidence="1">
    <location>
        <position position="95"/>
    </location>
</feature>
<feature type="cross-link" description="Tryptophyl-tyrosyl-methioninium (Trp-Tyr) (with M-252)" evidence="1">
    <location>
        <begin position="98"/>
        <end position="226"/>
    </location>
</feature>
<feature type="cross-link" description="Tryptophyl-tyrosyl-methioninium (Tyr-Met) (with W-98)" evidence="1">
    <location>
        <begin position="226"/>
        <end position="252"/>
    </location>
</feature>
<proteinExistence type="inferred from homology"/>
<gene>
    <name evidence="1" type="primary">katG</name>
    <name type="ordered locus">SPOA0061</name>
</gene>
<geneLocation type="plasmid">
    <name>megaplasmid Spo</name>
</geneLocation>
<dbReference type="EC" id="1.11.1.21" evidence="1"/>
<dbReference type="EMBL" id="CP000032">
    <property type="protein sequence ID" value="AAV97201.1"/>
    <property type="molecule type" value="Genomic_DNA"/>
</dbReference>
<dbReference type="RefSeq" id="WP_011241845.1">
    <property type="nucleotide sequence ID" value="NC_006569.1"/>
</dbReference>
<dbReference type="SMR" id="Q5LLG6"/>
<dbReference type="PeroxiBase" id="2384">
    <property type="entry name" value="SpoCP01"/>
</dbReference>
<dbReference type="PaxDb" id="246200-SPOA0061"/>
<dbReference type="KEGG" id="sil:SPOA0061"/>
<dbReference type="eggNOG" id="COG0376">
    <property type="taxonomic scope" value="Bacteria"/>
</dbReference>
<dbReference type="HOGENOM" id="CLU_025424_2_0_5"/>
<dbReference type="OrthoDB" id="9759743at2"/>
<dbReference type="BRENDA" id="1.11.1.6">
    <property type="organism ID" value="10803"/>
</dbReference>
<dbReference type="BRENDA" id="1.11.1.7">
    <property type="organism ID" value="10803"/>
</dbReference>
<dbReference type="Proteomes" id="UP000001023">
    <property type="component" value="Plasmid megaplasmid"/>
</dbReference>
<dbReference type="GO" id="GO:0005829">
    <property type="term" value="C:cytosol"/>
    <property type="evidence" value="ECO:0007669"/>
    <property type="project" value="TreeGrafter"/>
</dbReference>
<dbReference type="GO" id="GO:0004096">
    <property type="term" value="F:catalase activity"/>
    <property type="evidence" value="ECO:0007669"/>
    <property type="project" value="UniProtKB-UniRule"/>
</dbReference>
<dbReference type="GO" id="GO:0020037">
    <property type="term" value="F:heme binding"/>
    <property type="evidence" value="ECO:0007669"/>
    <property type="project" value="InterPro"/>
</dbReference>
<dbReference type="GO" id="GO:0046872">
    <property type="term" value="F:metal ion binding"/>
    <property type="evidence" value="ECO:0007669"/>
    <property type="project" value="UniProtKB-KW"/>
</dbReference>
<dbReference type="GO" id="GO:0070301">
    <property type="term" value="P:cellular response to hydrogen peroxide"/>
    <property type="evidence" value="ECO:0007669"/>
    <property type="project" value="TreeGrafter"/>
</dbReference>
<dbReference type="GO" id="GO:0042744">
    <property type="term" value="P:hydrogen peroxide catabolic process"/>
    <property type="evidence" value="ECO:0007669"/>
    <property type="project" value="UniProtKB-KW"/>
</dbReference>
<dbReference type="CDD" id="cd00649">
    <property type="entry name" value="catalase_peroxidase_1"/>
    <property type="match status" value="1"/>
</dbReference>
<dbReference type="CDD" id="cd08200">
    <property type="entry name" value="catalase_peroxidase_2"/>
    <property type="match status" value="1"/>
</dbReference>
<dbReference type="FunFam" id="1.10.420.10:FF:000004">
    <property type="entry name" value="Catalase-peroxidase"/>
    <property type="match status" value="1"/>
</dbReference>
<dbReference type="FunFam" id="1.10.520.10:FF:000002">
    <property type="entry name" value="Catalase-peroxidase"/>
    <property type="match status" value="1"/>
</dbReference>
<dbReference type="Gene3D" id="1.10.520.10">
    <property type="match status" value="2"/>
</dbReference>
<dbReference type="Gene3D" id="1.10.420.10">
    <property type="entry name" value="Peroxidase, domain 2"/>
    <property type="match status" value="2"/>
</dbReference>
<dbReference type="HAMAP" id="MF_01961">
    <property type="entry name" value="Catal_peroxid"/>
    <property type="match status" value="1"/>
</dbReference>
<dbReference type="InterPro" id="IPR000763">
    <property type="entry name" value="Catalase_peroxidase"/>
</dbReference>
<dbReference type="InterPro" id="IPR002016">
    <property type="entry name" value="Haem_peroxidase"/>
</dbReference>
<dbReference type="InterPro" id="IPR010255">
    <property type="entry name" value="Haem_peroxidase_sf"/>
</dbReference>
<dbReference type="InterPro" id="IPR019794">
    <property type="entry name" value="Peroxidases_AS"/>
</dbReference>
<dbReference type="InterPro" id="IPR019793">
    <property type="entry name" value="Peroxidases_heam-ligand_BS"/>
</dbReference>
<dbReference type="NCBIfam" id="TIGR00198">
    <property type="entry name" value="cat_per_HPI"/>
    <property type="match status" value="1"/>
</dbReference>
<dbReference type="NCBIfam" id="NF011635">
    <property type="entry name" value="PRK15061.1"/>
    <property type="match status" value="1"/>
</dbReference>
<dbReference type="PANTHER" id="PTHR30555:SF0">
    <property type="entry name" value="CATALASE-PEROXIDASE"/>
    <property type="match status" value="1"/>
</dbReference>
<dbReference type="PANTHER" id="PTHR30555">
    <property type="entry name" value="HYDROPEROXIDASE I, BIFUNCTIONAL CATALASE-PEROXIDASE"/>
    <property type="match status" value="1"/>
</dbReference>
<dbReference type="Pfam" id="PF00141">
    <property type="entry name" value="peroxidase"/>
    <property type="match status" value="2"/>
</dbReference>
<dbReference type="PRINTS" id="PR00460">
    <property type="entry name" value="BPEROXIDASE"/>
</dbReference>
<dbReference type="PRINTS" id="PR00458">
    <property type="entry name" value="PEROXIDASE"/>
</dbReference>
<dbReference type="SUPFAM" id="SSF48113">
    <property type="entry name" value="Heme-dependent peroxidases"/>
    <property type="match status" value="2"/>
</dbReference>
<dbReference type="PROSITE" id="PS00435">
    <property type="entry name" value="PEROXIDASE_1"/>
    <property type="match status" value="1"/>
</dbReference>
<dbReference type="PROSITE" id="PS00436">
    <property type="entry name" value="PEROXIDASE_2"/>
    <property type="match status" value="1"/>
</dbReference>
<dbReference type="PROSITE" id="PS50873">
    <property type="entry name" value="PEROXIDASE_4"/>
    <property type="match status" value="2"/>
</dbReference>
<protein>
    <recommendedName>
        <fullName evidence="1">Catalase-peroxidase</fullName>
        <shortName evidence="1">CP</shortName>
        <ecNumber evidence="1">1.11.1.21</ecNumber>
    </recommendedName>
    <alternativeName>
        <fullName evidence="1">Peroxidase/catalase</fullName>
    </alternativeName>
</protein>
<sequence length="731" mass="78773">MDGNDAPNAGQCPVMHGHAAGTGMRNHHWWPNQINLKVLHQHSSKSDPMGAQFNYAEAFKSLDLDALKADLTALMTDSQDWWPADYGHYGPLFIRMTWHAAGTYRTADGRGGGSTGNQRFAPLNSWPDNGNLDKARRLLWPIKKKYGDKISWADLLILTGNVALESMGFKTFGFAGGRPDIWEPEEDIYWGSEGEWLAPSDTANSRYSGARDLENPLAAVQMGLIYVNPEGPDGNPDIVASGHDVIETFGRMAMDEAETVALVAGGHTFGKAHGNGPASAVGPEPEAAPIEAMGLGWLSTHGSGKGADAITSGIEGAWKPHPTTWDMGYFKVLFKYDWELTKSPAGANIWLATNVEDEDMVEDAFDPSKKHRPMMTTADLSLRYHPKLLPHAKRFAEDPAAFADAFARAWFKLTHRDMGPRARYLGKEVPAEELIWQDPIPAGTQIDADDAAALKAQILASGLSVSDMVSTAWASASTFRGSDMRGGANGARIRLAPQKDWEVNEPAKLARVLGVLEGIQAGFSSGGKSVSMADLIVLAGCAGVEQAAKAGGHQIEVPFTSGRGDASAEQTDAESFAVMEPVMDGFRNYQARELSTSPEEMLVDRAQLLGLSAPEMTVLVAGLRVLGANHGGSAHGVLTNRPGVLSSDFLTNLLDMGTEWKPSGKGVYEGRDRASGAARWTATRVDLVFGSNSQLRALAERYAQDDAEASFVADFVAAWVKVMNADRFDLT</sequence>
<accession>Q5LLG6</accession>
<keyword id="KW-0349">Heme</keyword>
<keyword id="KW-0376">Hydrogen peroxide</keyword>
<keyword id="KW-0408">Iron</keyword>
<keyword id="KW-0479">Metal-binding</keyword>
<keyword id="KW-0560">Oxidoreductase</keyword>
<keyword id="KW-0575">Peroxidase</keyword>
<keyword id="KW-0614">Plasmid</keyword>
<keyword id="KW-1185">Reference proteome</keyword>
<organism>
    <name type="scientific">Ruegeria pomeroyi (strain ATCC 700808 / DSM 15171 / DSS-3)</name>
    <name type="common">Silicibacter pomeroyi</name>
    <dbReference type="NCBI Taxonomy" id="246200"/>
    <lineage>
        <taxon>Bacteria</taxon>
        <taxon>Pseudomonadati</taxon>
        <taxon>Pseudomonadota</taxon>
        <taxon>Alphaproteobacteria</taxon>
        <taxon>Rhodobacterales</taxon>
        <taxon>Roseobacteraceae</taxon>
        <taxon>Ruegeria</taxon>
    </lineage>
</organism>
<comment type="function">
    <text evidence="1">Bifunctional enzyme with both catalase and broad-spectrum peroxidase activity.</text>
</comment>
<comment type="catalytic activity">
    <reaction evidence="1">
        <text>H2O2 + AH2 = A + 2 H2O</text>
        <dbReference type="Rhea" id="RHEA:30275"/>
        <dbReference type="ChEBI" id="CHEBI:13193"/>
        <dbReference type="ChEBI" id="CHEBI:15377"/>
        <dbReference type="ChEBI" id="CHEBI:16240"/>
        <dbReference type="ChEBI" id="CHEBI:17499"/>
        <dbReference type="EC" id="1.11.1.21"/>
    </reaction>
</comment>
<comment type="catalytic activity">
    <reaction evidence="1">
        <text>2 H2O2 = O2 + 2 H2O</text>
        <dbReference type="Rhea" id="RHEA:20309"/>
        <dbReference type="ChEBI" id="CHEBI:15377"/>
        <dbReference type="ChEBI" id="CHEBI:15379"/>
        <dbReference type="ChEBI" id="CHEBI:16240"/>
        <dbReference type="EC" id="1.11.1.21"/>
    </reaction>
</comment>
<comment type="cofactor">
    <cofactor evidence="1">
        <name>heme b</name>
        <dbReference type="ChEBI" id="CHEBI:60344"/>
    </cofactor>
    <text evidence="1">Binds 1 heme b (iron(II)-protoporphyrin IX) group per dimer.</text>
</comment>
<comment type="subunit">
    <text evidence="1">Homodimer or homotetramer.</text>
</comment>
<comment type="PTM">
    <text evidence="1">Formation of the three residue Trp-Tyr-Met cross-link is important for the catalase, but not the peroxidase activity of the enzyme.</text>
</comment>
<comment type="similarity">
    <text evidence="1">Belongs to the peroxidase family. Peroxidase/catalase subfamily.</text>
</comment>